<proteinExistence type="inferred from homology"/>
<keyword id="KW-1003">Cell membrane</keyword>
<keyword id="KW-0175">Coiled coil</keyword>
<keyword id="KW-0449">Lipoprotein</keyword>
<keyword id="KW-0472">Membrane</keyword>
<keyword id="KW-0564">Palmitate</keyword>
<keyword id="KW-1185">Reference proteome</keyword>
<organism>
    <name type="scientific">Oryza sativa subsp. japonica</name>
    <name type="common">Rice</name>
    <dbReference type="NCBI Taxonomy" id="39947"/>
    <lineage>
        <taxon>Eukaryota</taxon>
        <taxon>Viridiplantae</taxon>
        <taxon>Streptophyta</taxon>
        <taxon>Embryophyta</taxon>
        <taxon>Tracheophyta</taxon>
        <taxon>Spermatophyta</taxon>
        <taxon>Magnoliopsida</taxon>
        <taxon>Liliopsida</taxon>
        <taxon>Poales</taxon>
        <taxon>Poaceae</taxon>
        <taxon>BOP clade</taxon>
        <taxon>Oryzoideae</taxon>
        <taxon>Oryzeae</taxon>
        <taxon>Oryzinae</taxon>
        <taxon>Oryza</taxon>
        <taxon>Oryza sativa</taxon>
    </lineage>
</organism>
<reference key="1">
    <citation type="journal article" date="2003" name="Science">
        <title>In-depth view of structure, activity, and evolution of rice chromosome 10.</title>
        <authorList>
            <person name="Yu Y."/>
            <person name="Rambo T."/>
            <person name="Currie J."/>
            <person name="Saski C."/>
            <person name="Kim H.-R."/>
            <person name="Collura K."/>
            <person name="Thompson S."/>
            <person name="Simmons J."/>
            <person name="Yang T.-J."/>
            <person name="Nah G."/>
            <person name="Patel A.J."/>
            <person name="Thurmond S."/>
            <person name="Henry D."/>
            <person name="Oates R."/>
            <person name="Palmer M."/>
            <person name="Pries G."/>
            <person name="Gibson J."/>
            <person name="Anderson H."/>
            <person name="Paradkar M."/>
            <person name="Crane L."/>
            <person name="Dale J."/>
            <person name="Carver M.B."/>
            <person name="Wood T."/>
            <person name="Frisch D."/>
            <person name="Engler F."/>
            <person name="Soderlund C."/>
            <person name="Palmer L.E."/>
            <person name="Teytelman L."/>
            <person name="Nascimento L."/>
            <person name="De la Bastide M."/>
            <person name="Spiegel L."/>
            <person name="Ware D."/>
            <person name="O'Shaughnessy A."/>
            <person name="Dike S."/>
            <person name="Dedhia N."/>
            <person name="Preston R."/>
            <person name="Huang E."/>
            <person name="Ferraro K."/>
            <person name="Kuit K."/>
            <person name="Miller B."/>
            <person name="Zutavern T."/>
            <person name="Katzenberger F."/>
            <person name="Muller S."/>
            <person name="Balija V."/>
            <person name="Martienssen R.A."/>
            <person name="Stein L."/>
            <person name="Minx P."/>
            <person name="Johnson D."/>
            <person name="Cordum H."/>
            <person name="Mardis E."/>
            <person name="Cheng Z."/>
            <person name="Jiang J."/>
            <person name="Wilson R."/>
            <person name="McCombie W.R."/>
            <person name="Wing R.A."/>
            <person name="Yuan Q."/>
            <person name="Ouyang S."/>
            <person name="Liu J."/>
            <person name="Jones K.M."/>
            <person name="Gansberger K."/>
            <person name="Moffat K."/>
            <person name="Hill J."/>
            <person name="Tsitrin T."/>
            <person name="Overton L."/>
            <person name="Bera J."/>
            <person name="Kim M."/>
            <person name="Jin S."/>
            <person name="Tallon L."/>
            <person name="Ciecko A."/>
            <person name="Pai G."/>
            <person name="Van Aken S."/>
            <person name="Utterback T."/>
            <person name="Reidmuller S."/>
            <person name="Bormann J."/>
            <person name="Feldblyum T."/>
            <person name="Hsiao J."/>
            <person name="Zismann V."/>
            <person name="Blunt S."/>
            <person name="de Vazeille A.R."/>
            <person name="Shaffer T."/>
            <person name="Koo H."/>
            <person name="Suh B."/>
            <person name="Yang Q."/>
            <person name="Haas B."/>
            <person name="Peterson J."/>
            <person name="Pertea M."/>
            <person name="Volfovsky N."/>
            <person name="Wortman J."/>
            <person name="White O."/>
            <person name="Salzberg S.L."/>
            <person name="Fraser C.M."/>
            <person name="Buell C.R."/>
            <person name="Messing J."/>
            <person name="Song R."/>
            <person name="Fuks G."/>
            <person name="Llaca V."/>
            <person name="Kovchak S."/>
            <person name="Young S."/>
            <person name="Bowers J.E."/>
            <person name="Paterson A.H."/>
            <person name="Johns M.A."/>
            <person name="Mao L."/>
            <person name="Pan H."/>
            <person name="Dean R.A."/>
        </authorList>
    </citation>
    <scope>NUCLEOTIDE SEQUENCE [LARGE SCALE GENOMIC DNA]</scope>
    <source>
        <strain>cv. Nipponbare</strain>
    </source>
</reference>
<reference key="2">
    <citation type="journal article" date="2005" name="Nature">
        <title>The map-based sequence of the rice genome.</title>
        <authorList>
            <consortium name="International rice genome sequencing project (IRGSP)"/>
        </authorList>
    </citation>
    <scope>NUCLEOTIDE SEQUENCE [LARGE SCALE GENOMIC DNA]</scope>
    <source>
        <strain>cv. Nipponbare</strain>
    </source>
</reference>
<reference key="3">
    <citation type="journal article" date="2013" name="Rice">
        <title>Improvement of the Oryza sativa Nipponbare reference genome using next generation sequence and optical map data.</title>
        <authorList>
            <person name="Kawahara Y."/>
            <person name="de la Bastide M."/>
            <person name="Hamilton J.P."/>
            <person name="Kanamori H."/>
            <person name="McCombie W.R."/>
            <person name="Ouyang S."/>
            <person name="Schwartz D.C."/>
            <person name="Tanaka T."/>
            <person name="Wu J."/>
            <person name="Zhou S."/>
            <person name="Childs K.L."/>
            <person name="Davidson R.M."/>
            <person name="Lin H."/>
            <person name="Quesada-Ocampo L."/>
            <person name="Vaillancourt B."/>
            <person name="Sakai H."/>
            <person name="Lee S.S."/>
            <person name="Kim J."/>
            <person name="Numa H."/>
            <person name="Itoh T."/>
            <person name="Buell C.R."/>
            <person name="Matsumoto T."/>
        </authorList>
    </citation>
    <scope>GENOME REANNOTATION</scope>
    <source>
        <strain>cv. Nipponbare</strain>
    </source>
</reference>
<reference key="4">
    <citation type="journal article" date="2005" name="PLoS Biol.">
        <title>The genomes of Oryza sativa: a history of duplications.</title>
        <authorList>
            <person name="Yu J."/>
            <person name="Wang J."/>
            <person name="Lin W."/>
            <person name="Li S."/>
            <person name="Li H."/>
            <person name="Zhou J."/>
            <person name="Ni P."/>
            <person name="Dong W."/>
            <person name="Hu S."/>
            <person name="Zeng C."/>
            <person name="Zhang J."/>
            <person name="Zhang Y."/>
            <person name="Li R."/>
            <person name="Xu Z."/>
            <person name="Li S."/>
            <person name="Li X."/>
            <person name="Zheng H."/>
            <person name="Cong L."/>
            <person name="Lin L."/>
            <person name="Yin J."/>
            <person name="Geng J."/>
            <person name="Li G."/>
            <person name="Shi J."/>
            <person name="Liu J."/>
            <person name="Lv H."/>
            <person name="Li J."/>
            <person name="Wang J."/>
            <person name="Deng Y."/>
            <person name="Ran L."/>
            <person name="Shi X."/>
            <person name="Wang X."/>
            <person name="Wu Q."/>
            <person name="Li C."/>
            <person name="Ren X."/>
            <person name="Wang J."/>
            <person name="Wang X."/>
            <person name="Li D."/>
            <person name="Liu D."/>
            <person name="Zhang X."/>
            <person name="Ji Z."/>
            <person name="Zhao W."/>
            <person name="Sun Y."/>
            <person name="Zhang Z."/>
            <person name="Bao J."/>
            <person name="Han Y."/>
            <person name="Dong L."/>
            <person name="Ji J."/>
            <person name="Chen P."/>
            <person name="Wu S."/>
            <person name="Liu J."/>
            <person name="Xiao Y."/>
            <person name="Bu D."/>
            <person name="Tan J."/>
            <person name="Yang L."/>
            <person name="Ye C."/>
            <person name="Zhang J."/>
            <person name="Xu J."/>
            <person name="Zhou Y."/>
            <person name="Yu Y."/>
            <person name="Zhang B."/>
            <person name="Zhuang S."/>
            <person name="Wei H."/>
            <person name="Liu B."/>
            <person name="Lei M."/>
            <person name="Yu H."/>
            <person name="Li Y."/>
            <person name="Xu H."/>
            <person name="Wei S."/>
            <person name="He X."/>
            <person name="Fang L."/>
            <person name="Zhang Z."/>
            <person name="Zhang Y."/>
            <person name="Huang X."/>
            <person name="Su Z."/>
            <person name="Tong W."/>
            <person name="Li J."/>
            <person name="Tong Z."/>
            <person name="Li S."/>
            <person name="Ye J."/>
            <person name="Wang L."/>
            <person name="Fang L."/>
            <person name="Lei T."/>
            <person name="Chen C.-S."/>
            <person name="Chen H.-C."/>
            <person name="Xu Z."/>
            <person name="Li H."/>
            <person name="Huang H."/>
            <person name="Zhang F."/>
            <person name="Xu H."/>
            <person name="Li N."/>
            <person name="Zhao C."/>
            <person name="Li S."/>
            <person name="Dong L."/>
            <person name="Huang Y."/>
            <person name="Li L."/>
            <person name="Xi Y."/>
            <person name="Qi Q."/>
            <person name="Li W."/>
            <person name="Zhang B."/>
            <person name="Hu W."/>
            <person name="Zhang Y."/>
            <person name="Tian X."/>
            <person name="Jiao Y."/>
            <person name="Liang X."/>
            <person name="Jin J."/>
            <person name="Gao L."/>
            <person name="Zheng W."/>
            <person name="Hao B."/>
            <person name="Liu S.-M."/>
            <person name="Wang W."/>
            <person name="Yuan L."/>
            <person name="Cao M."/>
            <person name="McDermott J."/>
            <person name="Samudrala R."/>
            <person name="Wang J."/>
            <person name="Wong G.K.-S."/>
            <person name="Yang H."/>
        </authorList>
    </citation>
    <scope>NUCLEOTIDE SEQUENCE [LARGE SCALE GENOMIC DNA]</scope>
    <source>
        <strain>cv. Nipponbare</strain>
    </source>
</reference>
<evidence type="ECO:0000250" key="1"/>
<evidence type="ECO:0000255" key="2"/>
<evidence type="ECO:0000305" key="3"/>
<feature type="chain" id="PRO_0000395214" description="Flotillin-like protein 3">
    <location>
        <begin position="1"/>
        <end position="496"/>
    </location>
</feature>
<feature type="coiled-coil region" evidence="2">
    <location>
        <begin position="301"/>
        <end position="328"/>
    </location>
</feature>
<feature type="lipid moiety-binding region" description="S-palmitoyl cysteine" evidence="2">
    <location>
        <position position="37"/>
    </location>
</feature>
<sequence length="496" mass="53668">MARFVVAGASEYLAITGWGIDDVKLAKKAWVFAGQKCLKFDATPVSYDIDVQAMSSEKLPFRLPAAYTIGPSPKIKRNPVVDGPAPPADTQRRLEDCDEEALLLYAKLIAASQIRSPNHVIDLVKGVIEGETRVLASSMTMEEIFQGTKKFKQQVFDQVQLALNELGLYIYSANVKQLVDDPDSPGNDYFSFLGQKRQAEVEGKAKVAEAEARMKGEIGAKEREGLTLQNAAKVDAETKVLSARQQGVGCREEIKVKADVEVYENEREADIAAARAALAVKKAGLDKQSKVAEVEAVKAVVVREAELQLEVERKNALRLTEKLKAEKLSKATVQYETQVQDSNAALYDRQMAADATLFEQVKSAEARKAQAGAKFFEQKLAEDARLYARQREAEALAGVGRAKAELVASMLQELGGDHGALRDSLMIDGGVYEEVARVNASAMSGIQPKISIRSRAGGANAGASSAGAVQQVAAADVYDMLPPFLQSSGGFNKLPL</sequence>
<accession>Q8LNW6</accession>
<accession>B9G6B1</accession>
<name>FLOT3_ORYSJ</name>
<comment type="function">
    <text evidence="1">May act as a scaffolding protein within caveolar membranes, functionally participating in formation of caveolae or caveolae-like vesicles.</text>
</comment>
<comment type="subcellular location">
    <subcellularLocation>
        <location evidence="3">Cell membrane</location>
        <topology evidence="3">Lipid-anchor</topology>
    </subcellularLocation>
    <subcellularLocation>
        <location evidence="1">Membrane</location>
        <location evidence="1">Caveola</location>
    </subcellularLocation>
</comment>
<comment type="PTM">
    <text evidence="3">May be palmitoylated.</text>
</comment>
<comment type="similarity">
    <text evidence="3">Belongs to the band 7/mec-2 family. Flotillin subfamily.</text>
</comment>
<comment type="sequence caution" evidence="3">
    <conflict type="erroneous gene model prediction">
        <sequence resource="EMBL-CDS" id="AAM91867"/>
    </conflict>
</comment>
<comment type="sequence caution" evidence="3">
    <conflict type="erroneous gene model prediction">
        <sequence resource="EMBL-CDS" id="AAP54316"/>
    </conflict>
</comment>
<protein>
    <recommendedName>
        <fullName>Flotillin-like protein 3</fullName>
    </recommendedName>
    <alternativeName>
        <fullName>Nodulin-like protein 3</fullName>
    </alternativeName>
</protein>
<gene>
    <name type="primary">FLOT3</name>
    <name type="ordered locus">LOC_Os10g34130</name>
    <name type="ORF">OsJ_31923</name>
    <name type="ORF">OSJNBa0012L23.44</name>
</gene>
<dbReference type="EMBL" id="AC051632">
    <property type="protein sequence ID" value="AAM91867.1"/>
    <property type="status" value="ALT_SEQ"/>
    <property type="molecule type" value="Genomic_DNA"/>
</dbReference>
<dbReference type="EMBL" id="DP000086">
    <property type="protein sequence ID" value="AAP54316.1"/>
    <property type="status" value="ALT_SEQ"/>
    <property type="molecule type" value="Genomic_DNA"/>
</dbReference>
<dbReference type="EMBL" id="AP014966">
    <property type="status" value="NOT_ANNOTATED_CDS"/>
    <property type="molecule type" value="Genomic_DNA"/>
</dbReference>
<dbReference type="EMBL" id="CM000147">
    <property type="protein sequence ID" value="EEE51158.1"/>
    <property type="molecule type" value="Genomic_DNA"/>
</dbReference>
<dbReference type="SMR" id="Q8LNW6"/>
<dbReference type="FunCoup" id="Q8LNW6">
    <property type="interactions" value="24"/>
</dbReference>
<dbReference type="STRING" id="39947.Q8LNW6"/>
<dbReference type="PaxDb" id="39947-Q8LNW6"/>
<dbReference type="eggNOG" id="KOG2668">
    <property type="taxonomic scope" value="Eukaryota"/>
</dbReference>
<dbReference type="HOGENOM" id="CLU_030844_1_1_1"/>
<dbReference type="InParanoid" id="Q8LNW6"/>
<dbReference type="Proteomes" id="UP000000763">
    <property type="component" value="Chromosome 10"/>
</dbReference>
<dbReference type="Proteomes" id="UP000007752">
    <property type="component" value="Chromosome 10"/>
</dbReference>
<dbReference type="Proteomes" id="UP000059680">
    <property type="component" value="Chromosome 10"/>
</dbReference>
<dbReference type="GO" id="GO:0005901">
    <property type="term" value="C:caveola"/>
    <property type="evidence" value="ECO:0007669"/>
    <property type="project" value="UniProtKB-SubCell"/>
</dbReference>
<dbReference type="GO" id="GO:0005886">
    <property type="term" value="C:plasma membrane"/>
    <property type="evidence" value="ECO:0000318"/>
    <property type="project" value="GO_Central"/>
</dbReference>
<dbReference type="GO" id="GO:0044853">
    <property type="term" value="C:plasma membrane raft"/>
    <property type="evidence" value="ECO:0000318"/>
    <property type="project" value="GO_Central"/>
</dbReference>
<dbReference type="CDD" id="cd03399">
    <property type="entry name" value="SPFH_flotillin"/>
    <property type="match status" value="1"/>
</dbReference>
<dbReference type="Gene3D" id="3.30.479.30">
    <property type="entry name" value="Band 7 domain"/>
    <property type="match status" value="1"/>
</dbReference>
<dbReference type="InterPro" id="IPR001107">
    <property type="entry name" value="Band_7"/>
</dbReference>
<dbReference type="InterPro" id="IPR036013">
    <property type="entry name" value="Band_7/SPFH_dom_sf"/>
</dbReference>
<dbReference type="InterPro" id="IPR027705">
    <property type="entry name" value="Flotillin_fam"/>
</dbReference>
<dbReference type="PANTHER" id="PTHR13806:SF23">
    <property type="entry name" value="FLOTILLIN-LIKE PROTEIN 2"/>
    <property type="match status" value="1"/>
</dbReference>
<dbReference type="PANTHER" id="PTHR13806">
    <property type="entry name" value="FLOTILLIN-RELATED"/>
    <property type="match status" value="1"/>
</dbReference>
<dbReference type="Pfam" id="PF01145">
    <property type="entry name" value="Band_7"/>
    <property type="match status" value="1"/>
</dbReference>
<dbReference type="SUPFAM" id="SSF117892">
    <property type="entry name" value="Band 7/SPFH domain"/>
    <property type="match status" value="1"/>
</dbReference>